<evidence type="ECO:0000255" key="1">
    <source>
        <dbReference type="HAMAP-Rule" id="MF_00227"/>
    </source>
</evidence>
<organism>
    <name type="scientific">Shigella sonnei (strain Ss046)</name>
    <dbReference type="NCBI Taxonomy" id="300269"/>
    <lineage>
        <taxon>Bacteria</taxon>
        <taxon>Pseudomonadati</taxon>
        <taxon>Pseudomonadota</taxon>
        <taxon>Gammaproteobacteria</taxon>
        <taxon>Enterobacterales</taxon>
        <taxon>Enterobacteriaceae</taxon>
        <taxon>Shigella</taxon>
    </lineage>
</organism>
<keyword id="KW-0255">Endonuclease</keyword>
<keyword id="KW-0378">Hydrolase</keyword>
<keyword id="KW-0540">Nuclease</keyword>
<keyword id="KW-1185">Reference proteome</keyword>
<keyword id="KW-0694">RNA-binding</keyword>
<keyword id="KW-0819">tRNA processing</keyword>
<accession>Q3YWB0</accession>
<feature type="chain" id="PRO_1000021467" description="Ribonuclease P protein component">
    <location>
        <begin position="1"/>
        <end position="119"/>
    </location>
</feature>
<name>RNPA_SHISS</name>
<sequence>MVKLAFPRELRLLTPSQFTFVFQQPQRAGTPQITILGRLNSLGHPRIGLTVAKKNVRRAHERNRIKRLTRESFRLRQHELPAMDFVVVAKKGVADLDNRALSEALEKLWRRHCRLARGS</sequence>
<comment type="function">
    <text evidence="1">RNaseP catalyzes the removal of the 5'-leader sequence from pre-tRNA to produce the mature 5'-terminus. It can also cleave other RNA substrates such as 4.5S RNA. The protein component plays an auxiliary but essential role in vivo by binding to the 5'-leader sequence and broadening the substrate specificity of the ribozyme.</text>
</comment>
<comment type="catalytic activity">
    <reaction evidence="1">
        <text>Endonucleolytic cleavage of RNA, removing 5'-extranucleotides from tRNA precursor.</text>
        <dbReference type="EC" id="3.1.26.5"/>
    </reaction>
</comment>
<comment type="subunit">
    <text evidence="1">Consists of a catalytic RNA component (M1 or rnpB) and a protein subunit.</text>
</comment>
<comment type="similarity">
    <text evidence="1">Belongs to the RnpA family.</text>
</comment>
<protein>
    <recommendedName>
        <fullName evidence="1">Ribonuclease P protein component</fullName>
        <shortName evidence="1">RNase P protein</shortName>
        <shortName evidence="1">RNaseP protein</shortName>
        <ecNumber evidence="1">3.1.26.5</ecNumber>
    </recommendedName>
    <alternativeName>
        <fullName evidence="1">Protein C5</fullName>
    </alternativeName>
</protein>
<reference key="1">
    <citation type="journal article" date="2005" name="Nucleic Acids Res.">
        <title>Genome dynamics and diversity of Shigella species, the etiologic agents of bacillary dysentery.</title>
        <authorList>
            <person name="Yang F."/>
            <person name="Yang J."/>
            <person name="Zhang X."/>
            <person name="Chen L."/>
            <person name="Jiang Y."/>
            <person name="Yan Y."/>
            <person name="Tang X."/>
            <person name="Wang J."/>
            <person name="Xiong Z."/>
            <person name="Dong J."/>
            <person name="Xue Y."/>
            <person name="Zhu Y."/>
            <person name="Xu X."/>
            <person name="Sun L."/>
            <person name="Chen S."/>
            <person name="Nie H."/>
            <person name="Peng J."/>
            <person name="Xu J."/>
            <person name="Wang Y."/>
            <person name="Yuan Z."/>
            <person name="Wen Y."/>
            <person name="Yao Z."/>
            <person name="Shen Y."/>
            <person name="Qiang B."/>
            <person name="Hou Y."/>
            <person name="Yu J."/>
            <person name="Jin Q."/>
        </authorList>
    </citation>
    <scope>NUCLEOTIDE SEQUENCE [LARGE SCALE GENOMIC DNA]</scope>
    <source>
        <strain>Ss046</strain>
    </source>
</reference>
<proteinExistence type="inferred from homology"/>
<gene>
    <name evidence="1" type="primary">rnpA</name>
    <name type="ordered locus">SSON_3654</name>
</gene>
<dbReference type="EC" id="3.1.26.5" evidence="1"/>
<dbReference type="EMBL" id="CP000038">
    <property type="protein sequence ID" value="AAZ90202.1"/>
    <property type="molecule type" value="Genomic_DNA"/>
</dbReference>
<dbReference type="RefSeq" id="WP_000239730.1">
    <property type="nucleotide sequence ID" value="NC_007384.1"/>
</dbReference>
<dbReference type="SMR" id="Q3YWB0"/>
<dbReference type="GeneID" id="93778446"/>
<dbReference type="KEGG" id="ssn:SSON_3654"/>
<dbReference type="HOGENOM" id="CLU_117179_11_0_6"/>
<dbReference type="Proteomes" id="UP000002529">
    <property type="component" value="Chromosome"/>
</dbReference>
<dbReference type="GO" id="GO:0030677">
    <property type="term" value="C:ribonuclease P complex"/>
    <property type="evidence" value="ECO:0007669"/>
    <property type="project" value="TreeGrafter"/>
</dbReference>
<dbReference type="GO" id="GO:0042781">
    <property type="term" value="F:3'-tRNA processing endoribonuclease activity"/>
    <property type="evidence" value="ECO:0007669"/>
    <property type="project" value="TreeGrafter"/>
</dbReference>
<dbReference type="GO" id="GO:0004526">
    <property type="term" value="F:ribonuclease P activity"/>
    <property type="evidence" value="ECO:0007669"/>
    <property type="project" value="UniProtKB-UniRule"/>
</dbReference>
<dbReference type="GO" id="GO:0000049">
    <property type="term" value="F:tRNA binding"/>
    <property type="evidence" value="ECO:0007669"/>
    <property type="project" value="UniProtKB-UniRule"/>
</dbReference>
<dbReference type="GO" id="GO:0001682">
    <property type="term" value="P:tRNA 5'-leader removal"/>
    <property type="evidence" value="ECO:0007669"/>
    <property type="project" value="UniProtKB-UniRule"/>
</dbReference>
<dbReference type="FunFam" id="3.30.230.10:FF:000016">
    <property type="entry name" value="Ribonuclease P protein component"/>
    <property type="match status" value="1"/>
</dbReference>
<dbReference type="Gene3D" id="3.30.230.10">
    <property type="match status" value="1"/>
</dbReference>
<dbReference type="HAMAP" id="MF_00227">
    <property type="entry name" value="RNase_P"/>
    <property type="match status" value="1"/>
</dbReference>
<dbReference type="InterPro" id="IPR020568">
    <property type="entry name" value="Ribosomal_Su5_D2-typ_SF"/>
</dbReference>
<dbReference type="InterPro" id="IPR014721">
    <property type="entry name" value="Ribsml_uS5_D2-typ_fold_subgr"/>
</dbReference>
<dbReference type="InterPro" id="IPR000100">
    <property type="entry name" value="RNase_P"/>
</dbReference>
<dbReference type="InterPro" id="IPR020539">
    <property type="entry name" value="RNase_P_CS"/>
</dbReference>
<dbReference type="NCBIfam" id="TIGR00188">
    <property type="entry name" value="rnpA"/>
    <property type="match status" value="1"/>
</dbReference>
<dbReference type="PANTHER" id="PTHR33992">
    <property type="entry name" value="RIBONUCLEASE P PROTEIN COMPONENT"/>
    <property type="match status" value="1"/>
</dbReference>
<dbReference type="PANTHER" id="PTHR33992:SF1">
    <property type="entry name" value="RIBONUCLEASE P PROTEIN COMPONENT"/>
    <property type="match status" value="1"/>
</dbReference>
<dbReference type="Pfam" id="PF00825">
    <property type="entry name" value="Ribonuclease_P"/>
    <property type="match status" value="1"/>
</dbReference>
<dbReference type="SUPFAM" id="SSF54211">
    <property type="entry name" value="Ribosomal protein S5 domain 2-like"/>
    <property type="match status" value="1"/>
</dbReference>
<dbReference type="PROSITE" id="PS00648">
    <property type="entry name" value="RIBONUCLEASE_P"/>
    <property type="match status" value="1"/>
</dbReference>